<name>SHUT_ADE12</name>
<comment type="function">
    <text evidence="1">Protein that inhibits host translation while promoting late viral translation by ribosome shunting. Blocks host cap-dependent translation by binding to eIF4G, displacing MKNK1 from cap initiation complexes and preventing EIF4E phosphorylation. Binds to the tripartite leader sequence of viral late mRNAs and recruits host eIF4G, PABPC1/poly-A binding protein and 40S ribosomes subunits on viral mRNAs, allowing ribosome shunting and efficient translation of late viral mRNAs even though conventional translation via ribosome scanning from the cap has been shut off in the host cell. During assembly, acts as a chaperone protein that helps hexon proteins assembly into trimers.</text>
</comment>
<comment type="subunit">
    <text evidence="1">Monomer. Interacts with hexon protein; this interaction allows chaperoning and trimerization of hexon proteins. Interacts (via N-terminus) with host initiation factor EIF4G (via C-terminus). Interacts (via RRM domain) with viral mRNAs that contain the tripartite leader; this interaction allows ribosome shunting and expression of viral late mRNAs.</text>
</comment>
<comment type="subcellular location">
    <subcellularLocation>
        <location evidence="1">Host cytoplasm</location>
    </subcellularLocation>
</comment>
<comment type="induction">
    <text evidence="1">Expressed in the late phase of the viral replicative cycle.</text>
</comment>
<comment type="PTM">
    <text evidence="1">Might be cleaved by the viral protease.</text>
</comment>
<comment type="PTM">
    <text evidence="1">Phosphorylated. Tyrosine phosphorylation enhances preferential binding to tripartite leader mRNAs and allows ribosome shunting.</text>
</comment>
<comment type="PTM">
    <text evidence="1">Methylated. Asymmetric dimethylation by host PRMT1 of the Arg/Gly-rich region may regulate shutoff protein binding to hexon and promote the capsid assembly in the nucleus.</text>
</comment>
<comment type="miscellaneous">
    <text evidence="1">All late proteins expressed from the major late promoter are produced by alternative splicing and alternative polyadenylation of the same gene giving rise to non-overlapping ORFs. A leader sequence is present in the N-terminus of all these mRNAs and is recognized by the viral shutoff protein to provide expression although conventional translation via ribosome scanning from the cap has been shut off in the host cell.</text>
</comment>
<comment type="similarity">
    <text evidence="1">Belongs to the adenoviridae shutoff protein family.</text>
</comment>
<keyword id="KW-0143">Chaperone</keyword>
<keyword id="KW-1262">Eukaryotic host gene expression shutoff by virus</keyword>
<keyword id="KW-1193">Eukaryotic host translation shutoff by virus</keyword>
<keyword id="KW-1035">Host cytoplasm</keyword>
<keyword id="KW-1190">Host gene expression shutoff by virus</keyword>
<keyword id="KW-0945">Host-virus interaction</keyword>
<keyword id="KW-1075">Inhibition of eukaryotic host translation factors by virus</keyword>
<keyword id="KW-0426">Late protein</keyword>
<keyword id="KW-0488">Methylation</keyword>
<keyword id="KW-0597">Phosphoprotein</keyword>
<keyword id="KW-1185">Reference proteome</keyword>
<keyword id="KW-0694">RNA-binding</keyword>
<keyword id="KW-1155">Translational shunt</keyword>
<keyword id="KW-0813">Transport</keyword>
<sequence length="782" mass="87683">MMDLEPQESLTAPTAPAIGATAVMEKDKSLLIPQDAPVEQNLGYETPPEEFEGFLQIQKQPNEQNAGLEDHDYLNEGDVLFKHLQRQSTIVRDAISDRSSIPVSIAELSCIYERNLFSPRVPPKRQANGTCEPNPRLNFYPVFAVPEALATYHIFFKNHKIPLSCRANRSRADELLALRAGASIPGIVSLEEVPKIFEGLGRDEKRAANALQKENEQNHHGNSALIELEGDNARLAVLKRNIEVTHFAYPAVNLPPKVMSAVMNQLLIKRAQPIDKDANLQDPEATDDGKPVVSDEQLTKWLGTDNSNELQQRRKLMMAAVLVTVELECMHRFFSDITTLRKIEECLHYTFRHGYVRQACKISNVELSNLVSYMGILHENRLGQNVLHSTLRDEARRDYVRDCIYLFLLHTWQTGMGVWQQCLEEKNLRELNKLLDRALKSLWTGFDERTVAAELADIIFPERLMITLQNGLPDFMSQSMLHNYRSFILERSGMLPSMCCALPSDFVPIYFRECPPPLWSHCYLLRLANYLAYHSDLMTDSSGEGLMECHCRCNLCTPHRSLVCNTELLSESQVIGTFEMQGPQSDSNFTTNLRLTPGLWTSAYLRKFEPQDYHAHSINFYEDQSKPPKAPLTACVITQGKILAQLHAIKQAREEFLLKKGHGVYLDPQTGEELNLPSPLCATASPHSQHVPESRKTGYCAATLKETAATAGNLGGRILGESGRGRGRGLGRMGGGGGGQPRRGSRGGGGRFQGRSDRRQTVAFNQALSNETRCEQISESQP</sequence>
<protein>
    <recommendedName>
        <fullName evidence="1">Shutoff protein</fullName>
    </recommendedName>
    <alternativeName>
        <fullName evidence="1">100 kDa protein</fullName>
        <shortName evidence="1">p100K</shortName>
    </alternativeName>
    <alternativeName>
        <fullName evidence="1">100K-chaperone protein</fullName>
    </alternativeName>
    <alternativeName>
        <fullName evidence="1">L4-100K</fullName>
    </alternativeName>
    <alternativeName>
        <fullName evidence="1">Shutoff protein 100K</fullName>
    </alternativeName>
</protein>
<evidence type="ECO:0000255" key="1">
    <source>
        <dbReference type="HAMAP-Rule" id="MF_04060"/>
    </source>
</evidence>
<evidence type="ECO:0000256" key="2">
    <source>
        <dbReference type="SAM" id="MobiDB-lite"/>
    </source>
</evidence>
<gene>
    <name evidence="1" type="primary">L4</name>
</gene>
<organism>
    <name type="scientific">Human adenovirus A serotype 12</name>
    <name type="common">HAdV-12</name>
    <name type="synonym">Human adenovirus 12</name>
    <dbReference type="NCBI Taxonomy" id="28282"/>
    <lineage>
        <taxon>Viruses</taxon>
        <taxon>Varidnaviria</taxon>
        <taxon>Bamfordvirae</taxon>
        <taxon>Preplasmiviricota</taxon>
        <taxon>Tectiliviricetes</taxon>
        <taxon>Rowavirales</taxon>
        <taxon>Adenoviridae</taxon>
        <taxon>Mastadenovirus</taxon>
        <taxon>Human mastadenovirus A</taxon>
    </lineage>
</organism>
<dbReference type="EMBL" id="X73487">
    <property type="protein sequence ID" value="CAA51894.1"/>
    <property type="molecule type" value="Genomic_DNA"/>
</dbReference>
<dbReference type="PIR" id="S33945">
    <property type="entry name" value="S33945"/>
</dbReference>
<dbReference type="RefSeq" id="NP_040927.1">
    <property type="nucleotide sequence ID" value="NC_001460.1"/>
</dbReference>
<dbReference type="SMR" id="P36714"/>
<dbReference type="DNASU" id="1460842"/>
<dbReference type="GeneID" id="1460842"/>
<dbReference type="KEGG" id="vg:1460842"/>
<dbReference type="Proteomes" id="UP000004993">
    <property type="component" value="Genome"/>
</dbReference>
<dbReference type="GO" id="GO:0043657">
    <property type="term" value="C:host cell"/>
    <property type="evidence" value="ECO:0007669"/>
    <property type="project" value="GOC"/>
</dbReference>
<dbReference type="GO" id="GO:0030430">
    <property type="term" value="C:host cell cytoplasm"/>
    <property type="evidence" value="ECO:0007669"/>
    <property type="project" value="UniProtKB-SubCell"/>
</dbReference>
<dbReference type="GO" id="GO:0003723">
    <property type="term" value="F:RNA binding"/>
    <property type="evidence" value="ECO:0007669"/>
    <property type="project" value="UniProtKB-UniRule"/>
</dbReference>
<dbReference type="GO" id="GO:0019060">
    <property type="term" value="P:intracellular transport of viral protein in host cell"/>
    <property type="evidence" value="ECO:0007669"/>
    <property type="project" value="UniProtKB-UniRule"/>
</dbReference>
<dbReference type="GO" id="GO:0039657">
    <property type="term" value="P:symbiont-mediated suppression of host gene expression"/>
    <property type="evidence" value="ECO:0007669"/>
    <property type="project" value="UniProtKB-UniRule"/>
</dbReference>
<dbReference type="GO" id="GO:0039606">
    <property type="term" value="P:symbiont-mediated suppression of host translation initiation"/>
    <property type="evidence" value="ECO:0007669"/>
    <property type="project" value="UniProtKB-KW"/>
</dbReference>
<dbReference type="GO" id="GO:0039704">
    <property type="term" value="P:viral translational shunt"/>
    <property type="evidence" value="ECO:0000250"/>
    <property type="project" value="UniProtKB"/>
</dbReference>
<dbReference type="HAMAP" id="MF_04060">
    <property type="entry name" value="ADV_SHUT"/>
    <property type="match status" value="1"/>
</dbReference>
<dbReference type="InterPro" id="IPR003381">
    <property type="entry name" value="L4"/>
</dbReference>
<dbReference type="Pfam" id="PF02438">
    <property type="entry name" value="Adeno_100"/>
    <property type="match status" value="1"/>
</dbReference>
<accession>P36714</accession>
<reference key="1">
    <citation type="journal article" date="1994" name="J. Virol.">
        <title>Nucleotide sequence of human adenovirus type 12 DNA: comparative functional analysis.</title>
        <authorList>
            <person name="Sprengel J."/>
            <person name="Schmitz B."/>
            <person name="Heuss-Neitzel D."/>
            <person name="Zock C."/>
            <person name="Doerfler W."/>
        </authorList>
    </citation>
    <scope>NUCLEOTIDE SEQUENCE [LARGE SCALE GENOMIC DNA]</scope>
</reference>
<organismHost>
    <name type="scientific">Homo sapiens</name>
    <name type="common">Human</name>
    <dbReference type="NCBI Taxonomy" id="9606"/>
</organismHost>
<proteinExistence type="inferred from homology"/>
<feature type="chain" id="PRO_0000221857" description="Shutoff protein">
    <location>
        <begin position="1"/>
        <end position="782"/>
    </location>
</feature>
<feature type="domain" description="RRM" evidence="1">
    <location>
        <begin position="332"/>
        <end position="450"/>
    </location>
</feature>
<feature type="region of interest" description="Binding to host EIF4G" evidence="1">
    <location>
        <begin position="262"/>
        <end position="329"/>
    </location>
</feature>
<feature type="region of interest" description="Disordered" evidence="2">
    <location>
        <begin position="715"/>
        <end position="760"/>
    </location>
</feature>
<feature type="compositionally biased region" description="Gly residues" evidence="2">
    <location>
        <begin position="728"/>
        <end position="752"/>
    </location>
</feature>
<feature type="modified residue" description="Phosphotyrosine; by host" evidence="1">
    <location>
        <position position="349"/>
    </location>
</feature>
<feature type="modified residue" description="Phosphotyrosine; by host" evidence="1">
    <location>
        <position position="665"/>
    </location>
</feature>